<evidence type="ECO:0000255" key="1">
    <source>
        <dbReference type="HAMAP-Rule" id="MF_01382"/>
    </source>
</evidence>
<sequence>MLIKLLTKVFGSRNDRTLRRMRKAVSLINAMEPEMEKLSDDELKAKTNEFRARIEKGESVESLIPEAFAVVREASKRVFGMRHFDVQLLGGMVLNDRCIAEMRTGEGKTLTATLPAYLNALSGKGVHVVTVNDYLAQRDAENNRPLFEFLGMSVGINLPGMPAPAKREAYAADITYGTNNEYGFDYLRDNMAFSPEERVQRKLHYALVDEVDSILIDEARTPLIISGPAEDSSEMYKKVNKIIPHLIRQEKEDSDTFQGEGHFSVDEKARQVNLTERGLVLIEELLVQEGIMDEGESLYSPGNIMLMHHVTAALRAHALFTRDVDYIVKDGEVIIVDEHTGRTMQGRRWSDGLHQAVEAKEGVEIQNENQTLASITFQNYFRLYEKLAGMTGTADTEAFEFSSIYKLDTVVVPTNRPMIRKDLPDLVYMTEAEKIQAIIEDIKERTANGQPVLVGTISIEKSEVVSRELTKAGIKHNVLNAKFHANEAGIVAQAGYPAAVTIATNMAGRGTDIMLGGSWQAEVAALEAPTEEQIAQIKADWQVRHDAVLAAGGLHIIGTERHESRRIDNQLRGRSGRQGDPGSSRFYLSMEDALMRIFASDRVSGMMRKLGMKPGEAIEHPWVTKAIANAQRKVESRNFDIRKQLLEYDDVANDQRRAIYTQRNELLDVSDVSDTINSIREDVFKATIDAYIPPQSLEEMWDIPGLQERLKNDFDLEMPIAEWLDKEPELHEETLRERILAQSIEVYQRKEEVVGAEMMRHFEKGVMLQTLDSLWKEHLAAMDYLRQGIHLRGYAQKDPKQEYKRESFAMFAAMLESLKYEVISTLSKVQVRMPEEVEAMEMQRREEAERLAQMQQLSHQDDDAAVAADLAAQTGERKIGRNDPCPCGSGKKYKQCHGRLS</sequence>
<keyword id="KW-0067">ATP-binding</keyword>
<keyword id="KW-0997">Cell inner membrane</keyword>
<keyword id="KW-1003">Cell membrane</keyword>
<keyword id="KW-0963">Cytoplasm</keyword>
<keyword id="KW-0472">Membrane</keyword>
<keyword id="KW-0479">Metal-binding</keyword>
<keyword id="KW-0547">Nucleotide-binding</keyword>
<keyword id="KW-0653">Protein transport</keyword>
<keyword id="KW-1278">Translocase</keyword>
<keyword id="KW-0811">Translocation</keyword>
<keyword id="KW-0813">Transport</keyword>
<keyword id="KW-0862">Zinc</keyword>
<proteinExistence type="inferred from homology"/>
<name>SECA_SALCH</name>
<dbReference type="EC" id="7.4.2.8" evidence="1"/>
<dbReference type="EMBL" id="AE017220">
    <property type="protein sequence ID" value="AAX64039.1"/>
    <property type="molecule type" value="Genomic_DNA"/>
</dbReference>
<dbReference type="RefSeq" id="WP_000905756.1">
    <property type="nucleotide sequence ID" value="NC_006905.1"/>
</dbReference>
<dbReference type="SMR" id="Q57TC2"/>
<dbReference type="KEGG" id="sec:SCH_0133"/>
<dbReference type="HOGENOM" id="CLU_005314_3_0_6"/>
<dbReference type="Proteomes" id="UP000000538">
    <property type="component" value="Chromosome"/>
</dbReference>
<dbReference type="GO" id="GO:0031522">
    <property type="term" value="C:cell envelope Sec protein transport complex"/>
    <property type="evidence" value="ECO:0007669"/>
    <property type="project" value="TreeGrafter"/>
</dbReference>
<dbReference type="GO" id="GO:0005829">
    <property type="term" value="C:cytosol"/>
    <property type="evidence" value="ECO:0007669"/>
    <property type="project" value="TreeGrafter"/>
</dbReference>
<dbReference type="GO" id="GO:0005886">
    <property type="term" value="C:plasma membrane"/>
    <property type="evidence" value="ECO:0007669"/>
    <property type="project" value="UniProtKB-SubCell"/>
</dbReference>
<dbReference type="GO" id="GO:0005524">
    <property type="term" value="F:ATP binding"/>
    <property type="evidence" value="ECO:0007669"/>
    <property type="project" value="UniProtKB-UniRule"/>
</dbReference>
<dbReference type="GO" id="GO:0046872">
    <property type="term" value="F:metal ion binding"/>
    <property type="evidence" value="ECO:0007669"/>
    <property type="project" value="UniProtKB-KW"/>
</dbReference>
<dbReference type="GO" id="GO:0008564">
    <property type="term" value="F:protein-exporting ATPase activity"/>
    <property type="evidence" value="ECO:0007669"/>
    <property type="project" value="UniProtKB-EC"/>
</dbReference>
<dbReference type="GO" id="GO:0065002">
    <property type="term" value="P:intracellular protein transmembrane transport"/>
    <property type="evidence" value="ECO:0007669"/>
    <property type="project" value="UniProtKB-UniRule"/>
</dbReference>
<dbReference type="GO" id="GO:0017038">
    <property type="term" value="P:protein import"/>
    <property type="evidence" value="ECO:0007669"/>
    <property type="project" value="InterPro"/>
</dbReference>
<dbReference type="GO" id="GO:0006605">
    <property type="term" value="P:protein targeting"/>
    <property type="evidence" value="ECO:0007669"/>
    <property type="project" value="UniProtKB-UniRule"/>
</dbReference>
<dbReference type="GO" id="GO:0043952">
    <property type="term" value="P:protein transport by the Sec complex"/>
    <property type="evidence" value="ECO:0007669"/>
    <property type="project" value="TreeGrafter"/>
</dbReference>
<dbReference type="CDD" id="cd17928">
    <property type="entry name" value="DEXDc_SecA"/>
    <property type="match status" value="1"/>
</dbReference>
<dbReference type="CDD" id="cd18803">
    <property type="entry name" value="SF2_C_secA"/>
    <property type="match status" value="1"/>
</dbReference>
<dbReference type="FunFam" id="1.10.3060.10:FF:000001">
    <property type="entry name" value="Preprotein translocase subunit SecA"/>
    <property type="match status" value="1"/>
</dbReference>
<dbReference type="FunFam" id="3.40.50.300:FF:000081">
    <property type="entry name" value="Preprotein translocase subunit SecA"/>
    <property type="match status" value="1"/>
</dbReference>
<dbReference type="FunFam" id="3.40.50.300:FF:000113">
    <property type="entry name" value="Preprotein translocase subunit SecA"/>
    <property type="match status" value="1"/>
</dbReference>
<dbReference type="FunFam" id="3.90.1440.10:FF:000001">
    <property type="entry name" value="Preprotein translocase subunit SecA"/>
    <property type="match status" value="1"/>
</dbReference>
<dbReference type="Gene3D" id="1.10.3060.10">
    <property type="entry name" value="Helical scaffold and wing domains of SecA"/>
    <property type="match status" value="1"/>
</dbReference>
<dbReference type="Gene3D" id="3.40.50.300">
    <property type="entry name" value="P-loop containing nucleotide triphosphate hydrolases"/>
    <property type="match status" value="2"/>
</dbReference>
<dbReference type="Gene3D" id="3.90.1440.10">
    <property type="entry name" value="SecA, preprotein cross-linking domain"/>
    <property type="match status" value="1"/>
</dbReference>
<dbReference type="HAMAP" id="MF_01382">
    <property type="entry name" value="SecA"/>
    <property type="match status" value="1"/>
</dbReference>
<dbReference type="InterPro" id="IPR014001">
    <property type="entry name" value="Helicase_ATP-bd"/>
</dbReference>
<dbReference type="InterPro" id="IPR027417">
    <property type="entry name" value="P-loop_NTPase"/>
</dbReference>
<dbReference type="InterPro" id="IPR004027">
    <property type="entry name" value="SEC_C_motif"/>
</dbReference>
<dbReference type="InterPro" id="IPR000185">
    <property type="entry name" value="SecA"/>
</dbReference>
<dbReference type="InterPro" id="IPR020937">
    <property type="entry name" value="SecA_CS"/>
</dbReference>
<dbReference type="InterPro" id="IPR011115">
    <property type="entry name" value="SecA_DEAD"/>
</dbReference>
<dbReference type="InterPro" id="IPR014018">
    <property type="entry name" value="SecA_motor_DEAD"/>
</dbReference>
<dbReference type="InterPro" id="IPR011130">
    <property type="entry name" value="SecA_preprotein_X-link_dom"/>
</dbReference>
<dbReference type="InterPro" id="IPR044722">
    <property type="entry name" value="SecA_SF2_C"/>
</dbReference>
<dbReference type="InterPro" id="IPR011116">
    <property type="entry name" value="SecA_Wing/Scaffold"/>
</dbReference>
<dbReference type="InterPro" id="IPR036266">
    <property type="entry name" value="SecA_Wing/Scaffold_sf"/>
</dbReference>
<dbReference type="InterPro" id="IPR036670">
    <property type="entry name" value="SecA_X-link_sf"/>
</dbReference>
<dbReference type="NCBIfam" id="NF009538">
    <property type="entry name" value="PRK12904.1"/>
    <property type="match status" value="1"/>
</dbReference>
<dbReference type="NCBIfam" id="TIGR00963">
    <property type="entry name" value="secA"/>
    <property type="match status" value="1"/>
</dbReference>
<dbReference type="PANTHER" id="PTHR30612:SF0">
    <property type="entry name" value="CHLOROPLAST PROTEIN-TRANSPORTING ATPASE"/>
    <property type="match status" value="1"/>
</dbReference>
<dbReference type="PANTHER" id="PTHR30612">
    <property type="entry name" value="SECA INNER MEMBRANE COMPONENT OF SEC PROTEIN SECRETION SYSTEM"/>
    <property type="match status" value="1"/>
</dbReference>
<dbReference type="Pfam" id="PF21090">
    <property type="entry name" value="P-loop_SecA"/>
    <property type="match status" value="1"/>
</dbReference>
<dbReference type="Pfam" id="PF02810">
    <property type="entry name" value="SEC-C"/>
    <property type="match status" value="1"/>
</dbReference>
<dbReference type="Pfam" id="PF07517">
    <property type="entry name" value="SecA_DEAD"/>
    <property type="match status" value="1"/>
</dbReference>
<dbReference type="Pfam" id="PF01043">
    <property type="entry name" value="SecA_PP_bind"/>
    <property type="match status" value="1"/>
</dbReference>
<dbReference type="Pfam" id="PF07516">
    <property type="entry name" value="SecA_SW"/>
    <property type="match status" value="1"/>
</dbReference>
<dbReference type="PRINTS" id="PR00906">
    <property type="entry name" value="SECA"/>
</dbReference>
<dbReference type="SMART" id="SM00957">
    <property type="entry name" value="SecA_DEAD"/>
    <property type="match status" value="1"/>
</dbReference>
<dbReference type="SMART" id="SM00958">
    <property type="entry name" value="SecA_PP_bind"/>
    <property type="match status" value="1"/>
</dbReference>
<dbReference type="SUPFAM" id="SSF81886">
    <property type="entry name" value="Helical scaffold and wing domains of SecA"/>
    <property type="match status" value="1"/>
</dbReference>
<dbReference type="SUPFAM" id="SSF52540">
    <property type="entry name" value="P-loop containing nucleoside triphosphate hydrolases"/>
    <property type="match status" value="2"/>
</dbReference>
<dbReference type="SUPFAM" id="SSF81767">
    <property type="entry name" value="Pre-protein crosslinking domain of SecA"/>
    <property type="match status" value="1"/>
</dbReference>
<dbReference type="PROSITE" id="PS01312">
    <property type="entry name" value="SECA"/>
    <property type="match status" value="1"/>
</dbReference>
<dbReference type="PROSITE" id="PS51196">
    <property type="entry name" value="SECA_MOTOR_DEAD"/>
    <property type="match status" value="1"/>
</dbReference>
<organism>
    <name type="scientific">Salmonella choleraesuis (strain SC-B67)</name>
    <dbReference type="NCBI Taxonomy" id="321314"/>
    <lineage>
        <taxon>Bacteria</taxon>
        <taxon>Pseudomonadati</taxon>
        <taxon>Pseudomonadota</taxon>
        <taxon>Gammaproteobacteria</taxon>
        <taxon>Enterobacterales</taxon>
        <taxon>Enterobacteriaceae</taxon>
        <taxon>Salmonella</taxon>
    </lineage>
</organism>
<protein>
    <recommendedName>
        <fullName evidence="1">Protein translocase subunit SecA</fullName>
        <ecNumber evidence="1">7.4.2.8</ecNumber>
    </recommendedName>
</protein>
<comment type="function">
    <text evidence="1">Part of the Sec protein translocase complex. Interacts with the SecYEG preprotein conducting channel. Has a central role in coupling the hydrolysis of ATP to the transfer of proteins into and across the cell membrane, serving both as a receptor for the preprotein-SecB complex and as an ATP-driven molecular motor driving the stepwise translocation of polypeptide chains across the membrane.</text>
</comment>
<comment type="catalytic activity">
    <reaction evidence="1">
        <text>ATP + H2O + cellular proteinSide 1 = ADP + phosphate + cellular proteinSide 2.</text>
        <dbReference type="EC" id="7.4.2.8"/>
    </reaction>
</comment>
<comment type="cofactor">
    <cofactor evidence="1">
        <name>Zn(2+)</name>
        <dbReference type="ChEBI" id="CHEBI:29105"/>
    </cofactor>
    <text evidence="1">May bind 1 zinc ion per subunit.</text>
</comment>
<comment type="subunit">
    <text evidence="1">Monomer and homodimer. Part of the essential Sec protein translocation apparatus which comprises SecA, SecYEG and auxiliary proteins SecDF-YajC and YidC.</text>
</comment>
<comment type="subcellular location">
    <subcellularLocation>
        <location evidence="1">Cell inner membrane</location>
        <topology evidence="1">Peripheral membrane protein</topology>
        <orientation evidence="1">Cytoplasmic side</orientation>
    </subcellularLocation>
    <subcellularLocation>
        <location evidence="1">Cytoplasm</location>
    </subcellularLocation>
    <text evidence="1">Distribution is 50-50.</text>
</comment>
<comment type="induction">
    <text evidence="1">Repressed under conditions of excess protein secretion capacity and derepressed when protein secretion becomes limiting. This is regulated by SecM.</text>
</comment>
<comment type="similarity">
    <text evidence="1">Belongs to the SecA family.</text>
</comment>
<accession>Q57TC2</accession>
<gene>
    <name evidence="1" type="primary">secA</name>
    <name type="ordered locus">SCH_0133</name>
</gene>
<feature type="chain" id="PRO_0000320984" description="Protein translocase subunit SecA">
    <location>
        <begin position="1"/>
        <end position="901"/>
    </location>
</feature>
<feature type="binding site" evidence="1">
    <location>
        <position position="87"/>
    </location>
    <ligand>
        <name>ATP</name>
        <dbReference type="ChEBI" id="CHEBI:30616"/>
    </ligand>
</feature>
<feature type="binding site" evidence="1">
    <location>
        <begin position="105"/>
        <end position="109"/>
    </location>
    <ligand>
        <name>ATP</name>
        <dbReference type="ChEBI" id="CHEBI:30616"/>
    </ligand>
</feature>
<feature type="binding site" evidence="1">
    <location>
        <position position="512"/>
    </location>
    <ligand>
        <name>ATP</name>
        <dbReference type="ChEBI" id="CHEBI:30616"/>
    </ligand>
</feature>
<feature type="binding site" evidence="1">
    <location>
        <position position="885"/>
    </location>
    <ligand>
        <name>Zn(2+)</name>
        <dbReference type="ChEBI" id="CHEBI:29105"/>
    </ligand>
</feature>
<feature type="binding site" evidence="1">
    <location>
        <position position="887"/>
    </location>
    <ligand>
        <name>Zn(2+)</name>
        <dbReference type="ChEBI" id="CHEBI:29105"/>
    </ligand>
</feature>
<feature type="binding site" evidence="1">
    <location>
        <position position="896"/>
    </location>
    <ligand>
        <name>Zn(2+)</name>
        <dbReference type="ChEBI" id="CHEBI:29105"/>
    </ligand>
</feature>
<feature type="binding site" evidence="1">
    <location>
        <position position="897"/>
    </location>
    <ligand>
        <name>Zn(2+)</name>
        <dbReference type="ChEBI" id="CHEBI:29105"/>
    </ligand>
</feature>
<reference key="1">
    <citation type="journal article" date="2005" name="Nucleic Acids Res.">
        <title>The genome sequence of Salmonella enterica serovar Choleraesuis, a highly invasive and resistant zoonotic pathogen.</title>
        <authorList>
            <person name="Chiu C.-H."/>
            <person name="Tang P."/>
            <person name="Chu C."/>
            <person name="Hu S."/>
            <person name="Bao Q."/>
            <person name="Yu J."/>
            <person name="Chou Y.-Y."/>
            <person name="Wang H.-S."/>
            <person name="Lee Y.-S."/>
        </authorList>
    </citation>
    <scope>NUCLEOTIDE SEQUENCE [LARGE SCALE GENOMIC DNA]</scope>
    <source>
        <strain>SC-B67</strain>
    </source>
</reference>